<organism>
    <name type="scientific">Haloferax volcanii (strain ATCC 29605 / DSM 3757 / JCM 8879 / NBRC 14742 / NCIMB 2012 / VKM B-1768 / DS2)</name>
    <name type="common">Halobacterium volcanii</name>
    <dbReference type="NCBI Taxonomy" id="309800"/>
    <lineage>
        <taxon>Archaea</taxon>
        <taxon>Methanobacteriati</taxon>
        <taxon>Methanobacteriota</taxon>
        <taxon>Stenosarchaea group</taxon>
        <taxon>Halobacteria</taxon>
        <taxon>Halobacteriales</taxon>
        <taxon>Haloferacaceae</taxon>
        <taxon>Haloferax</taxon>
    </lineage>
</organism>
<evidence type="ECO:0000255" key="1"/>
<evidence type="ECO:0000255" key="2">
    <source>
        <dbReference type="PROSITE-ProRule" id="PRU00441"/>
    </source>
</evidence>
<evidence type="ECO:0000269" key="3">
    <source>
    </source>
</evidence>
<evidence type="ECO:0000303" key="4">
    <source>
    </source>
</evidence>
<evidence type="ECO:0000305" key="5"/>
<evidence type="ECO:0000305" key="6">
    <source>
    </source>
</evidence>
<evidence type="ECO:0000312" key="7">
    <source>
        <dbReference type="EMBL" id="ADE01611.1"/>
    </source>
</evidence>
<name>XACI_HALVD</name>
<reference key="1">
    <citation type="journal article" date="2010" name="PLoS ONE">
        <title>The complete genome sequence of Haloferax volcanii DS2, a model archaeon.</title>
        <authorList>
            <person name="Hartman A.L."/>
            <person name="Norais C."/>
            <person name="Badger J.H."/>
            <person name="Delmas S."/>
            <person name="Haldenby S."/>
            <person name="Madupu R."/>
            <person name="Robinson J."/>
            <person name="Khouri H."/>
            <person name="Ren Q."/>
            <person name="Lowe T.M."/>
            <person name="Maupin-Furlow J."/>
            <person name="Pohlschroder M."/>
            <person name="Daniels C."/>
            <person name="Pfeiffer F."/>
            <person name="Allers T."/>
            <person name="Eisen J.A."/>
        </authorList>
    </citation>
    <scope>NUCLEOTIDE SEQUENCE [LARGE SCALE GENOMIC DNA]</scope>
    <source>
        <strain>ATCC 29605 / DSM 3757 / JCM 8879 / NBRC 14742 / NCIMB 2012 / VKM B-1768 / DS2</strain>
    </source>
</reference>
<reference key="2">
    <citation type="journal article" date="2019" name="FEMS Microbiol. Lett.">
        <title>Uptake of D-xylose and L-arabinose in Haloferax volcanii involves an ABC transporter of the CUT1 subfamily.</title>
        <authorList>
            <person name="Johnsen U."/>
            <person name="Ortjohann M."/>
            <person name="Sutter J.M."/>
            <person name="Geweke S."/>
            <person name="Schoenheit P."/>
        </authorList>
    </citation>
    <scope>FUNCTION</scope>
    <scope>SUBUNIT</scope>
    <scope>INDUCTION</scope>
    <source>
        <strain>DS2 / DS70 / H26</strain>
    </source>
</reference>
<keyword id="KW-1003">Cell membrane</keyword>
<keyword id="KW-0472">Membrane</keyword>
<keyword id="KW-0614">Plasmid</keyword>
<keyword id="KW-1185">Reference proteome</keyword>
<keyword id="KW-0762">Sugar transport</keyword>
<keyword id="KW-0812">Transmembrane</keyword>
<keyword id="KW-1133">Transmembrane helix</keyword>
<keyword id="KW-0813">Transport</keyword>
<accession>D4GP37</accession>
<accession>L9VI94</accession>
<geneLocation type="plasmid">
    <name>pHV3</name>
</geneLocation>
<feature type="chain" id="PRO_0000449392" description="Xylose/arabinose import permease protein XacI">
    <location>
        <begin position="1"/>
        <end position="309"/>
    </location>
</feature>
<feature type="transmembrane region" description="Helical" evidence="1">
    <location>
        <begin position="29"/>
        <end position="49"/>
    </location>
</feature>
<feature type="transmembrane region" description="Helical" evidence="1 2">
    <location>
        <begin position="89"/>
        <end position="109"/>
    </location>
</feature>
<feature type="transmembrane region" description="Helical" evidence="1 2">
    <location>
        <begin position="121"/>
        <end position="141"/>
    </location>
</feature>
<feature type="transmembrane region" description="Helical" evidence="1 2">
    <location>
        <begin position="170"/>
        <end position="190"/>
    </location>
</feature>
<feature type="transmembrane region" description="Helical" evidence="1 2">
    <location>
        <begin position="227"/>
        <end position="247"/>
    </location>
</feature>
<feature type="transmembrane region" description="Helical" evidence="1 2">
    <location>
        <begin position="282"/>
        <end position="302"/>
    </location>
</feature>
<feature type="domain" description="ABC transmembrane type-1" evidence="2">
    <location>
        <begin position="85"/>
        <end position="297"/>
    </location>
</feature>
<protein>
    <recommendedName>
        <fullName evidence="5">Xylose/arabinose import permease protein XacI</fullName>
    </recommendedName>
</protein>
<sequence length="309" mass="33669">MSQSSSTGNFDVASLVEDVNLRRVAQYALVVFFLGFFLVPLETGIMTAIKTNESVARSLPFAPPVGEGFTLGNIQFALEQLSGSFFNSLIMSIPATIGSVLFGSMAAYGLTMVNWRAQMGMLMLFVVGVFVPYQAVLVPLARFWNNIFPLARMIEPMVASIPFFQGYHAELVPLVITHIAYGIPICTILFRSYYQSLPNSLVEAGKIDGASITKIYRRIILPISKPMFGVVFIYQFTQIYNEFLFAFTLVTGSDAPAAPVTLVLPAIGASTSGINFGIRMSAAFLAAVPTLILYVAFAEQFAKGLRTEA</sequence>
<proteinExistence type="evidence at protein level"/>
<comment type="function">
    <text evidence="3 5">Part of the ABC transporter complex XacGHIJK involved in the uptake of xylose and arabinose (PubMed:31089701). Responsible for the translocation of the substrate across the membrane (Probable).</text>
</comment>
<comment type="subunit">
    <text evidence="6">The complex is composed of two ATP-binding proteins (XacJ and XacK), two transmembrane proteins (XacH and XacI) and a solute-binding protein (XacG).</text>
</comment>
<comment type="subcellular location">
    <subcellularLocation>
        <location evidence="5">Cell membrane</location>
        <topology evidence="1">Multi-pass membrane protein</topology>
    </subcellularLocation>
</comment>
<comment type="induction">
    <text evidence="3">Transcriptionally up-regulated by both L-arabinose and D-xylose via the pentose-specific regulator XacR.</text>
</comment>
<comment type="similarity">
    <text evidence="5">Belongs to the binding-protein-dependent transport system permease family.</text>
</comment>
<dbReference type="EMBL" id="CP001953">
    <property type="protein sequence ID" value="ADE01611.1"/>
    <property type="molecule type" value="Genomic_DNA"/>
</dbReference>
<dbReference type="RefSeq" id="WP_004041119.1">
    <property type="nucleotide sequence ID" value="NC_013964.1"/>
</dbReference>
<dbReference type="SMR" id="D4GP37"/>
<dbReference type="TCDB" id="3.A.1.1.56">
    <property type="family name" value="the atp-binding cassette (abc) superfamily"/>
</dbReference>
<dbReference type="PaxDb" id="309800-C498_01580"/>
<dbReference type="EnsemblBacteria" id="ADE01611">
    <property type="protein sequence ID" value="ADE01611"/>
    <property type="gene ID" value="HVO_B0036"/>
</dbReference>
<dbReference type="GeneID" id="8919031"/>
<dbReference type="KEGG" id="hvo:HVO_B0036"/>
<dbReference type="PATRIC" id="fig|309800.29.peg.301"/>
<dbReference type="eggNOG" id="arCOG00159">
    <property type="taxonomic scope" value="Archaea"/>
</dbReference>
<dbReference type="HOGENOM" id="CLU_016047_1_2_2"/>
<dbReference type="OrthoDB" id="97781at2157"/>
<dbReference type="Proteomes" id="UP000008243">
    <property type="component" value="Plasmid pHV3"/>
</dbReference>
<dbReference type="GO" id="GO:0005886">
    <property type="term" value="C:plasma membrane"/>
    <property type="evidence" value="ECO:0007669"/>
    <property type="project" value="UniProtKB-SubCell"/>
</dbReference>
<dbReference type="GO" id="GO:0055085">
    <property type="term" value="P:transmembrane transport"/>
    <property type="evidence" value="ECO:0007669"/>
    <property type="project" value="InterPro"/>
</dbReference>
<dbReference type="CDD" id="cd06261">
    <property type="entry name" value="TM_PBP2"/>
    <property type="match status" value="1"/>
</dbReference>
<dbReference type="Gene3D" id="1.10.3720.10">
    <property type="entry name" value="MetI-like"/>
    <property type="match status" value="1"/>
</dbReference>
<dbReference type="InterPro" id="IPR000515">
    <property type="entry name" value="MetI-like"/>
</dbReference>
<dbReference type="InterPro" id="IPR035906">
    <property type="entry name" value="MetI-like_sf"/>
</dbReference>
<dbReference type="PANTHER" id="PTHR43879">
    <property type="entry name" value="ABC TRANSPORTER PERMEASE PROTEIN"/>
    <property type="match status" value="1"/>
</dbReference>
<dbReference type="PANTHER" id="PTHR43879:SF1">
    <property type="entry name" value="GLUCOSE IMPORT SYSTEM PERMEASE PROTEIN GLCU"/>
    <property type="match status" value="1"/>
</dbReference>
<dbReference type="Pfam" id="PF00528">
    <property type="entry name" value="BPD_transp_1"/>
    <property type="match status" value="1"/>
</dbReference>
<dbReference type="SUPFAM" id="SSF161098">
    <property type="entry name" value="MetI-like"/>
    <property type="match status" value="1"/>
</dbReference>
<dbReference type="PROSITE" id="PS50928">
    <property type="entry name" value="ABC_TM1"/>
    <property type="match status" value="1"/>
</dbReference>
<gene>
    <name evidence="4" type="primary">xacI</name>
    <name evidence="7" type="synonym">tsgC7</name>
    <name evidence="7" type="ordered locus">HVO_B0036</name>
</gene>